<proteinExistence type="inferred from homology"/>
<organism>
    <name type="scientific">Rhodobacter capsulatus</name>
    <name type="common">Rhodopseudomonas capsulata</name>
    <dbReference type="NCBI Taxonomy" id="1061"/>
    <lineage>
        <taxon>Bacteria</taxon>
        <taxon>Pseudomonadati</taxon>
        <taxon>Pseudomonadota</taxon>
        <taxon>Alphaproteobacteria</taxon>
        <taxon>Rhodobacterales</taxon>
        <taxon>Rhodobacter group</taxon>
        <taxon>Rhodobacter</taxon>
    </lineage>
</organism>
<dbReference type="EC" id="6.6.1.1"/>
<dbReference type="EMBL" id="Z11165">
    <property type="protein sequence ID" value="CAA77536.1"/>
    <property type="molecule type" value="Genomic_DNA"/>
</dbReference>
<dbReference type="PIR" id="S17820">
    <property type="entry name" value="S17820"/>
</dbReference>
<dbReference type="RefSeq" id="WP_013066419.1">
    <property type="nucleotide sequence ID" value="NZ_VIBE01000010.1"/>
</dbReference>
<dbReference type="SMR" id="P26174"/>
<dbReference type="ESTHER" id="rhoca-bchO">
    <property type="family name" value="Mg-chelatase_BchO"/>
</dbReference>
<dbReference type="GeneID" id="31489621"/>
<dbReference type="OMA" id="RRIDCPP"/>
<dbReference type="UniPathway" id="UPA00671"/>
<dbReference type="GO" id="GO:0016020">
    <property type="term" value="C:membrane"/>
    <property type="evidence" value="ECO:0007669"/>
    <property type="project" value="TreeGrafter"/>
</dbReference>
<dbReference type="GO" id="GO:0005524">
    <property type="term" value="F:ATP binding"/>
    <property type="evidence" value="ECO:0007669"/>
    <property type="project" value="UniProtKB-KW"/>
</dbReference>
<dbReference type="GO" id="GO:0016851">
    <property type="term" value="F:magnesium chelatase activity"/>
    <property type="evidence" value="ECO:0007669"/>
    <property type="project" value="UniProtKB-EC"/>
</dbReference>
<dbReference type="GO" id="GO:0047372">
    <property type="term" value="F:monoacylglycerol lipase activity"/>
    <property type="evidence" value="ECO:0007669"/>
    <property type="project" value="TreeGrafter"/>
</dbReference>
<dbReference type="GO" id="GO:0046464">
    <property type="term" value="P:acylglycerol catabolic process"/>
    <property type="evidence" value="ECO:0007669"/>
    <property type="project" value="TreeGrafter"/>
</dbReference>
<dbReference type="GO" id="GO:0036070">
    <property type="term" value="P:light-independent bacteriochlorophyll biosynthetic process"/>
    <property type="evidence" value="ECO:0007669"/>
    <property type="project" value="UniProtKB-UniPathway"/>
</dbReference>
<dbReference type="GO" id="GO:0015979">
    <property type="term" value="P:photosynthesis"/>
    <property type="evidence" value="ECO:0007669"/>
    <property type="project" value="UniProtKB-KW"/>
</dbReference>
<dbReference type="Gene3D" id="3.40.50.1820">
    <property type="entry name" value="alpha/beta hydrolase"/>
    <property type="match status" value="1"/>
</dbReference>
<dbReference type="InterPro" id="IPR000073">
    <property type="entry name" value="AB_hydrolase_1"/>
</dbReference>
<dbReference type="InterPro" id="IPR029058">
    <property type="entry name" value="AB_hydrolase_fold"/>
</dbReference>
<dbReference type="InterPro" id="IPR050266">
    <property type="entry name" value="AB_hydrolase_sf"/>
</dbReference>
<dbReference type="InterPro" id="IPR017497">
    <property type="entry name" value="BchO"/>
</dbReference>
<dbReference type="NCBIfam" id="TIGR03056">
    <property type="entry name" value="bchO_mg_che_rel"/>
    <property type="match status" value="1"/>
</dbReference>
<dbReference type="PANTHER" id="PTHR43798:SF33">
    <property type="entry name" value="HYDROLASE, PUTATIVE (AFU_ORTHOLOGUE AFUA_2G14860)-RELATED"/>
    <property type="match status" value="1"/>
</dbReference>
<dbReference type="PANTHER" id="PTHR43798">
    <property type="entry name" value="MONOACYLGLYCEROL LIPASE"/>
    <property type="match status" value="1"/>
</dbReference>
<dbReference type="Pfam" id="PF00561">
    <property type="entry name" value="Abhydrolase_1"/>
    <property type="match status" value="1"/>
</dbReference>
<dbReference type="PRINTS" id="PR00111">
    <property type="entry name" value="ABHYDROLASE"/>
</dbReference>
<dbReference type="SUPFAM" id="SSF53474">
    <property type="entry name" value="alpha/beta-Hydrolases"/>
    <property type="match status" value="1"/>
</dbReference>
<name>BCHO_RHOCA</name>
<protein>
    <recommendedName>
        <fullName>Magnesium-chelatase 30 kDa subunit</fullName>
        <ecNumber>6.6.1.1</ecNumber>
    </recommendedName>
    <alternativeName>
        <fullName>Mg-protoporphyrin IX chelatase</fullName>
    </alternativeName>
</protein>
<keyword id="KW-0067">ATP-binding</keyword>
<keyword id="KW-0077">Bacteriochlorophyll biosynthesis</keyword>
<keyword id="KW-0149">Chlorophyll biosynthesis</keyword>
<keyword id="KW-0436">Ligase</keyword>
<keyword id="KW-0547">Nucleotide-binding</keyword>
<keyword id="KW-0602">Photosynthesis</keyword>
<feature type="chain" id="PRO_0000207071" description="Magnesium-chelatase 30 kDa subunit">
    <location>
        <begin position="1"/>
        <end position="284"/>
    </location>
</feature>
<feature type="domain" description="AB hydrolase-1" evidence="1">
    <location>
        <begin position="37"/>
        <end position="269"/>
    </location>
</feature>
<comment type="catalytic activity">
    <reaction>
        <text>protoporphyrin IX + Mg(2+) + ATP + H2O = Mg-protoporphyrin IX + ADP + phosphate + 3 H(+)</text>
        <dbReference type="Rhea" id="RHEA:13961"/>
        <dbReference type="ChEBI" id="CHEBI:15377"/>
        <dbReference type="ChEBI" id="CHEBI:15378"/>
        <dbReference type="ChEBI" id="CHEBI:18420"/>
        <dbReference type="ChEBI" id="CHEBI:30616"/>
        <dbReference type="ChEBI" id="CHEBI:43474"/>
        <dbReference type="ChEBI" id="CHEBI:57306"/>
        <dbReference type="ChEBI" id="CHEBI:60492"/>
        <dbReference type="ChEBI" id="CHEBI:456216"/>
        <dbReference type="EC" id="6.6.1.1"/>
    </reaction>
</comment>
<comment type="pathway">
    <text>Porphyrin-containing compound metabolism; bacteriochlorophyll biosynthesis (light-independent).</text>
</comment>
<comment type="similarity">
    <text evidence="2">Belongs to the lipase/esterase LIP3/BchO family.</text>
</comment>
<accession>P26174</accession>
<sequence length="284" mass="30189">MDPRALPANWPYRSAAARRRVGPIDWWVIDTGPADGPVLLLLHGLGASGHSFRKMIPGLSARYRVIVPDLPGHGCSRSTARNRFGLKPMAEDLWKLCQHLNVTPAAVIGHSAGGAIALQLALDTPVPRVVGINAALDHFEGVAGVVFPMMARGLAALPFTAPLVTRFGASRQRIGQLLDMTGSVIDAAGKAYYTALIQTPEHVDGGLRMMAQWELGPLIGALPRIAKPVFLIAGNGDRAVPAHVSADAARFLPMATLRRIDGGHLIHEVAADGLSGMILDWLEG</sequence>
<evidence type="ECO:0000255" key="1"/>
<evidence type="ECO:0000305" key="2"/>
<reference key="1">
    <citation type="submission" date="1991-11" db="EMBL/GenBank/DDBJ databases">
        <authorList>
            <person name="Burke D.H."/>
            <person name="Alberti M."/>
            <person name="Armstrong G.A."/>
            <person name="Hearst J.E."/>
        </authorList>
    </citation>
    <scope>NUCLEOTIDE SEQUENCE [GENOMIC DNA]</scope>
</reference>
<gene>
    <name type="primary">bchO</name>
</gene>